<feature type="chain" id="PRO_0000101565" description="Ribosomal RNA small subunit methyltransferase A">
    <location>
        <begin position="1"/>
        <end position="263"/>
    </location>
</feature>
<feature type="binding site" evidence="1">
    <location>
        <position position="13"/>
    </location>
    <ligand>
        <name>S-adenosyl-L-methionine</name>
        <dbReference type="ChEBI" id="CHEBI:59789"/>
    </ligand>
</feature>
<feature type="binding site" evidence="1">
    <location>
        <position position="15"/>
    </location>
    <ligand>
        <name>S-adenosyl-L-methionine</name>
        <dbReference type="ChEBI" id="CHEBI:59789"/>
    </ligand>
</feature>
<feature type="binding site" evidence="1">
    <location>
        <position position="40"/>
    </location>
    <ligand>
        <name>S-adenosyl-L-methionine</name>
        <dbReference type="ChEBI" id="CHEBI:59789"/>
    </ligand>
</feature>
<feature type="binding site" evidence="1">
    <location>
        <position position="61"/>
    </location>
    <ligand>
        <name>S-adenosyl-L-methionine</name>
        <dbReference type="ChEBI" id="CHEBI:59789"/>
    </ligand>
</feature>
<feature type="binding site" evidence="1">
    <location>
        <position position="85"/>
    </location>
    <ligand>
        <name>S-adenosyl-L-methionine</name>
        <dbReference type="ChEBI" id="CHEBI:59789"/>
    </ligand>
</feature>
<feature type="binding site" evidence="1">
    <location>
        <position position="105"/>
    </location>
    <ligand>
        <name>S-adenosyl-L-methionine</name>
        <dbReference type="ChEBI" id="CHEBI:59789"/>
    </ligand>
</feature>
<reference key="1">
    <citation type="journal article" date="1996" name="Nucleic Acids Res.">
        <title>Complete sequence analysis of the genome of the bacterium Mycoplasma pneumoniae.</title>
        <authorList>
            <person name="Himmelreich R."/>
            <person name="Hilbert H."/>
            <person name="Plagens H."/>
            <person name="Pirkl E."/>
            <person name="Li B.-C."/>
            <person name="Herrmann R."/>
        </authorList>
    </citation>
    <scope>NUCLEOTIDE SEQUENCE [LARGE SCALE GENOMIC DNA]</scope>
    <source>
        <strain>ATCC 29342 / M129 / Subtype 1</strain>
    </source>
</reference>
<evidence type="ECO:0000255" key="1">
    <source>
        <dbReference type="HAMAP-Rule" id="MF_00607"/>
    </source>
</evidence>
<comment type="function">
    <text evidence="1">Specifically dimethylates two adjacent adenosines (A1518 and A1519) in the loop of a conserved hairpin near the 3'-end of 16S rRNA in the 30S particle. May play a critical role in biogenesis of 30S subunits.</text>
</comment>
<comment type="catalytic activity">
    <reaction evidence="1">
        <text>adenosine(1518)/adenosine(1519) in 16S rRNA + 4 S-adenosyl-L-methionine = N(6)-dimethyladenosine(1518)/N(6)-dimethyladenosine(1519) in 16S rRNA + 4 S-adenosyl-L-homocysteine + 4 H(+)</text>
        <dbReference type="Rhea" id="RHEA:19609"/>
        <dbReference type="Rhea" id="RHEA-COMP:10232"/>
        <dbReference type="Rhea" id="RHEA-COMP:10233"/>
        <dbReference type="ChEBI" id="CHEBI:15378"/>
        <dbReference type="ChEBI" id="CHEBI:57856"/>
        <dbReference type="ChEBI" id="CHEBI:59789"/>
        <dbReference type="ChEBI" id="CHEBI:74411"/>
        <dbReference type="ChEBI" id="CHEBI:74493"/>
        <dbReference type="EC" id="2.1.1.182"/>
    </reaction>
</comment>
<comment type="subcellular location">
    <subcellularLocation>
        <location evidence="1">Cytoplasm</location>
    </subcellularLocation>
</comment>
<comment type="similarity">
    <text evidence="1">Belongs to the class I-like SAM-binding methyltransferase superfamily. rRNA adenine N(6)-methyltransferase family. RsmA subfamily.</text>
</comment>
<proteinExistence type="inferred from homology"/>
<dbReference type="EC" id="2.1.1.182" evidence="1"/>
<dbReference type="EMBL" id="U00089">
    <property type="protein sequence ID" value="AAB95811.1"/>
    <property type="molecule type" value="Genomic_DNA"/>
</dbReference>
<dbReference type="PIR" id="S73489">
    <property type="entry name" value="S73489"/>
</dbReference>
<dbReference type="RefSeq" id="NP_110368.1">
    <property type="nucleotide sequence ID" value="NC_000912.1"/>
</dbReference>
<dbReference type="RefSeq" id="WP_010875036.1">
    <property type="nucleotide sequence ID" value="NZ_OU342337.1"/>
</dbReference>
<dbReference type="SMR" id="P75113"/>
<dbReference type="STRING" id="272634.MPN_679"/>
<dbReference type="EnsemblBacteria" id="AAB95811">
    <property type="protein sequence ID" value="AAB95811"/>
    <property type="gene ID" value="MPN_679"/>
</dbReference>
<dbReference type="GeneID" id="66608633"/>
<dbReference type="KEGG" id="mpn:MPN_679"/>
<dbReference type="PATRIC" id="fig|272634.6.peg.746"/>
<dbReference type="HOGENOM" id="CLU_041220_0_2_14"/>
<dbReference type="OrthoDB" id="9814755at2"/>
<dbReference type="BioCyc" id="MPNE272634:G1GJ3-1087-MONOMER"/>
<dbReference type="Proteomes" id="UP000000808">
    <property type="component" value="Chromosome"/>
</dbReference>
<dbReference type="GO" id="GO:0005829">
    <property type="term" value="C:cytosol"/>
    <property type="evidence" value="ECO:0007669"/>
    <property type="project" value="TreeGrafter"/>
</dbReference>
<dbReference type="GO" id="GO:0052908">
    <property type="term" value="F:16S rRNA (adenine(1518)-N(6)/adenine(1519)-N(6))-dimethyltransferase activity"/>
    <property type="evidence" value="ECO:0007669"/>
    <property type="project" value="UniProtKB-EC"/>
</dbReference>
<dbReference type="GO" id="GO:0003723">
    <property type="term" value="F:RNA binding"/>
    <property type="evidence" value="ECO:0007669"/>
    <property type="project" value="UniProtKB-KW"/>
</dbReference>
<dbReference type="Gene3D" id="1.10.8.100">
    <property type="entry name" value="Ribosomal RNA adenine dimethylase-like, domain 2"/>
    <property type="match status" value="1"/>
</dbReference>
<dbReference type="Gene3D" id="3.40.50.150">
    <property type="entry name" value="Vaccinia Virus protein VP39"/>
    <property type="match status" value="1"/>
</dbReference>
<dbReference type="HAMAP" id="MF_00607">
    <property type="entry name" value="16SrRNA_methyltr_A"/>
    <property type="match status" value="1"/>
</dbReference>
<dbReference type="InterPro" id="IPR001737">
    <property type="entry name" value="KsgA/Erm"/>
</dbReference>
<dbReference type="InterPro" id="IPR023165">
    <property type="entry name" value="rRNA_Ade_diMease-like_C"/>
</dbReference>
<dbReference type="InterPro" id="IPR020596">
    <property type="entry name" value="rRNA_Ade_Mease_Trfase_CS"/>
</dbReference>
<dbReference type="InterPro" id="IPR020598">
    <property type="entry name" value="rRNA_Ade_methylase_Trfase_N"/>
</dbReference>
<dbReference type="InterPro" id="IPR011530">
    <property type="entry name" value="rRNA_adenine_dimethylase"/>
</dbReference>
<dbReference type="InterPro" id="IPR029063">
    <property type="entry name" value="SAM-dependent_MTases_sf"/>
</dbReference>
<dbReference type="NCBIfam" id="TIGR00755">
    <property type="entry name" value="ksgA"/>
    <property type="match status" value="1"/>
</dbReference>
<dbReference type="PANTHER" id="PTHR11727">
    <property type="entry name" value="DIMETHYLADENOSINE TRANSFERASE"/>
    <property type="match status" value="1"/>
</dbReference>
<dbReference type="PANTHER" id="PTHR11727:SF7">
    <property type="entry name" value="DIMETHYLADENOSINE TRANSFERASE-RELATED"/>
    <property type="match status" value="1"/>
</dbReference>
<dbReference type="Pfam" id="PF00398">
    <property type="entry name" value="RrnaAD"/>
    <property type="match status" value="1"/>
</dbReference>
<dbReference type="SMART" id="SM00650">
    <property type="entry name" value="rADc"/>
    <property type="match status" value="1"/>
</dbReference>
<dbReference type="SUPFAM" id="SSF53335">
    <property type="entry name" value="S-adenosyl-L-methionine-dependent methyltransferases"/>
    <property type="match status" value="1"/>
</dbReference>
<dbReference type="PROSITE" id="PS01131">
    <property type="entry name" value="RRNA_A_DIMETH"/>
    <property type="match status" value="1"/>
</dbReference>
<dbReference type="PROSITE" id="PS51689">
    <property type="entry name" value="SAM_RNA_A_N6_MT"/>
    <property type="match status" value="1"/>
</dbReference>
<sequence>MNSFYPSRKLGQNFTVDQSVIAKTCRLIKSLNPTALIEVGPGKGALTKALLKLQLPYHGIELDKRLAEYLLVNEILTEEQLTIGDALKQNLDQYFPDTIPLLCGNIPYSISSPLIANFLASKLQQFVLVCQWEFGQRLVAPVNSPNYSAFGVFCQYHLQIKSVFKIDKVAFKPKPQVDSVLMLLKKKPQVAYEAHFGRFLKQCFHQRRKLLVNNLKQLLPPTLLTNVLQQQDLAATVRAQELTPTQLFRLYLSLKPHLSDGKD</sequence>
<protein>
    <recommendedName>
        <fullName evidence="1">Ribosomal RNA small subunit methyltransferase A</fullName>
        <ecNumber evidence="1">2.1.1.182</ecNumber>
    </recommendedName>
    <alternativeName>
        <fullName evidence="1">16S rRNA (adenine(1518)-N(6)/adenine(1519)-N(6))-dimethyltransferase</fullName>
    </alternativeName>
    <alternativeName>
        <fullName evidence="1">16S rRNA dimethyladenosine transferase</fullName>
    </alternativeName>
    <alternativeName>
        <fullName evidence="1">16S rRNA dimethylase</fullName>
    </alternativeName>
    <alternativeName>
        <fullName evidence="1">S-adenosylmethionine-6-N', N'-adenosyl(rRNA) dimethyltransferase</fullName>
    </alternativeName>
</protein>
<accession>P75113</accession>
<keyword id="KW-0963">Cytoplasm</keyword>
<keyword id="KW-0489">Methyltransferase</keyword>
<keyword id="KW-1185">Reference proteome</keyword>
<keyword id="KW-0694">RNA-binding</keyword>
<keyword id="KW-0698">rRNA processing</keyword>
<keyword id="KW-0949">S-adenosyl-L-methionine</keyword>
<keyword id="KW-0808">Transferase</keyword>
<name>RSMA_MYCPN</name>
<organism>
    <name type="scientific">Mycoplasma pneumoniae (strain ATCC 29342 / M129 / Subtype 1)</name>
    <name type="common">Mycoplasmoides pneumoniae</name>
    <dbReference type="NCBI Taxonomy" id="272634"/>
    <lineage>
        <taxon>Bacteria</taxon>
        <taxon>Bacillati</taxon>
        <taxon>Mycoplasmatota</taxon>
        <taxon>Mycoplasmoidales</taxon>
        <taxon>Mycoplasmoidaceae</taxon>
        <taxon>Mycoplasmoides</taxon>
    </lineage>
</organism>
<gene>
    <name evidence="1" type="primary">rsmA</name>
    <name evidence="1" type="synonym">ksgA</name>
    <name type="ordered locus">MPN_679</name>
    <name type="ORF">MP163</name>
</gene>